<gene>
    <name evidence="1" type="primary">rpsJ</name>
    <name type="ordered locus">GSU2858</name>
</gene>
<protein>
    <recommendedName>
        <fullName evidence="1">Small ribosomal subunit protein uS10</fullName>
    </recommendedName>
    <alternativeName>
        <fullName evidence="2">30S ribosomal protein S10</fullName>
    </alternativeName>
</protein>
<dbReference type="EMBL" id="AE017180">
    <property type="protein sequence ID" value="AAR36251.1"/>
    <property type="molecule type" value="Genomic_DNA"/>
</dbReference>
<dbReference type="RefSeq" id="NP_953901.1">
    <property type="nucleotide sequence ID" value="NC_002939.5"/>
</dbReference>
<dbReference type="RefSeq" id="WP_010943487.1">
    <property type="nucleotide sequence ID" value="NC_002939.5"/>
</dbReference>
<dbReference type="SMR" id="Q748Z0"/>
<dbReference type="FunCoup" id="Q748Z0">
    <property type="interactions" value="677"/>
</dbReference>
<dbReference type="STRING" id="243231.GSU2858"/>
<dbReference type="EnsemblBacteria" id="AAR36251">
    <property type="protein sequence ID" value="AAR36251"/>
    <property type="gene ID" value="GSU2858"/>
</dbReference>
<dbReference type="KEGG" id="gsu:GSU2858"/>
<dbReference type="PATRIC" id="fig|243231.5.peg.2884"/>
<dbReference type="eggNOG" id="COG0051">
    <property type="taxonomic scope" value="Bacteria"/>
</dbReference>
<dbReference type="HOGENOM" id="CLU_122625_1_3_7"/>
<dbReference type="InParanoid" id="Q748Z0"/>
<dbReference type="OrthoDB" id="9804464at2"/>
<dbReference type="Proteomes" id="UP000000577">
    <property type="component" value="Chromosome"/>
</dbReference>
<dbReference type="GO" id="GO:0015935">
    <property type="term" value="C:small ribosomal subunit"/>
    <property type="evidence" value="ECO:0000318"/>
    <property type="project" value="GO_Central"/>
</dbReference>
<dbReference type="GO" id="GO:0003735">
    <property type="term" value="F:structural constituent of ribosome"/>
    <property type="evidence" value="ECO:0000318"/>
    <property type="project" value="GO_Central"/>
</dbReference>
<dbReference type="GO" id="GO:0000049">
    <property type="term" value="F:tRNA binding"/>
    <property type="evidence" value="ECO:0007669"/>
    <property type="project" value="UniProtKB-UniRule"/>
</dbReference>
<dbReference type="GO" id="GO:0006412">
    <property type="term" value="P:translation"/>
    <property type="evidence" value="ECO:0007669"/>
    <property type="project" value="UniProtKB-UniRule"/>
</dbReference>
<dbReference type="FunFam" id="3.30.70.600:FF:000001">
    <property type="entry name" value="30S ribosomal protein S10"/>
    <property type="match status" value="1"/>
</dbReference>
<dbReference type="Gene3D" id="3.30.70.600">
    <property type="entry name" value="Ribosomal protein S10 domain"/>
    <property type="match status" value="1"/>
</dbReference>
<dbReference type="HAMAP" id="MF_00508">
    <property type="entry name" value="Ribosomal_uS10"/>
    <property type="match status" value="1"/>
</dbReference>
<dbReference type="InterPro" id="IPR001848">
    <property type="entry name" value="Ribosomal_uS10"/>
</dbReference>
<dbReference type="InterPro" id="IPR018268">
    <property type="entry name" value="Ribosomal_uS10_CS"/>
</dbReference>
<dbReference type="InterPro" id="IPR027486">
    <property type="entry name" value="Ribosomal_uS10_dom"/>
</dbReference>
<dbReference type="InterPro" id="IPR036838">
    <property type="entry name" value="Ribosomal_uS10_dom_sf"/>
</dbReference>
<dbReference type="NCBIfam" id="NF001861">
    <property type="entry name" value="PRK00596.1"/>
    <property type="match status" value="1"/>
</dbReference>
<dbReference type="NCBIfam" id="TIGR01049">
    <property type="entry name" value="rpsJ_bact"/>
    <property type="match status" value="1"/>
</dbReference>
<dbReference type="PANTHER" id="PTHR11700">
    <property type="entry name" value="30S RIBOSOMAL PROTEIN S10 FAMILY MEMBER"/>
    <property type="match status" value="1"/>
</dbReference>
<dbReference type="Pfam" id="PF00338">
    <property type="entry name" value="Ribosomal_S10"/>
    <property type="match status" value="1"/>
</dbReference>
<dbReference type="PRINTS" id="PR00971">
    <property type="entry name" value="RIBOSOMALS10"/>
</dbReference>
<dbReference type="SMART" id="SM01403">
    <property type="entry name" value="Ribosomal_S10"/>
    <property type="match status" value="1"/>
</dbReference>
<dbReference type="SUPFAM" id="SSF54999">
    <property type="entry name" value="Ribosomal protein S10"/>
    <property type="match status" value="1"/>
</dbReference>
<dbReference type="PROSITE" id="PS00361">
    <property type="entry name" value="RIBOSOMAL_S10"/>
    <property type="match status" value="1"/>
</dbReference>
<reference key="1">
    <citation type="journal article" date="2003" name="Science">
        <title>Genome of Geobacter sulfurreducens: metal reduction in subsurface environments.</title>
        <authorList>
            <person name="Methe B.A."/>
            <person name="Nelson K.E."/>
            <person name="Eisen J.A."/>
            <person name="Paulsen I.T."/>
            <person name="Nelson W.C."/>
            <person name="Heidelberg J.F."/>
            <person name="Wu D."/>
            <person name="Wu M."/>
            <person name="Ward N.L."/>
            <person name="Beanan M.J."/>
            <person name="Dodson R.J."/>
            <person name="Madupu R."/>
            <person name="Brinkac L.M."/>
            <person name="Daugherty S.C."/>
            <person name="DeBoy R.T."/>
            <person name="Durkin A.S."/>
            <person name="Gwinn M.L."/>
            <person name="Kolonay J.F."/>
            <person name="Sullivan S.A."/>
            <person name="Haft D.H."/>
            <person name="Selengut J."/>
            <person name="Davidsen T.M."/>
            <person name="Zafar N."/>
            <person name="White O."/>
            <person name="Tran B."/>
            <person name="Romero C."/>
            <person name="Forberger H.A."/>
            <person name="Weidman J.F."/>
            <person name="Khouri H.M."/>
            <person name="Feldblyum T.V."/>
            <person name="Utterback T.R."/>
            <person name="Van Aken S.E."/>
            <person name="Lovley D.R."/>
            <person name="Fraser C.M."/>
        </authorList>
    </citation>
    <scope>NUCLEOTIDE SEQUENCE [LARGE SCALE GENOMIC DNA]</scope>
    <source>
        <strain>ATCC 51573 / DSM 12127 / PCA</strain>
    </source>
</reference>
<name>RS10_GEOSL</name>
<keyword id="KW-1185">Reference proteome</keyword>
<keyword id="KW-0687">Ribonucleoprotein</keyword>
<keyword id="KW-0689">Ribosomal protein</keyword>
<accession>Q748Z0</accession>
<comment type="function">
    <text evidence="1">Involved in the binding of tRNA to the ribosomes.</text>
</comment>
<comment type="subunit">
    <text evidence="1">Part of the 30S ribosomal subunit.</text>
</comment>
<comment type="similarity">
    <text evidence="1">Belongs to the universal ribosomal protein uS10 family.</text>
</comment>
<proteinExistence type="inferred from homology"/>
<evidence type="ECO:0000255" key="1">
    <source>
        <dbReference type="HAMAP-Rule" id="MF_00508"/>
    </source>
</evidence>
<evidence type="ECO:0000305" key="2"/>
<feature type="chain" id="PRO_0000146534" description="Small ribosomal subunit protein uS10">
    <location>
        <begin position="1"/>
        <end position="102"/>
    </location>
</feature>
<organism>
    <name type="scientific">Geobacter sulfurreducens (strain ATCC 51573 / DSM 12127 / PCA)</name>
    <dbReference type="NCBI Taxonomy" id="243231"/>
    <lineage>
        <taxon>Bacteria</taxon>
        <taxon>Pseudomonadati</taxon>
        <taxon>Thermodesulfobacteriota</taxon>
        <taxon>Desulfuromonadia</taxon>
        <taxon>Geobacterales</taxon>
        <taxon>Geobacteraceae</taxon>
        <taxon>Geobacter</taxon>
    </lineage>
</organism>
<sequence>MPSQKIRIRLKAFDHKLLDQSVGEIVDTAKRTGARVAGPIPLPTVINKYCVLRGPHVDKKSREQFEIRTHKRLIDILDPTQQTVDALMKLDLSAGVDVEIKL</sequence>